<keyword id="KW-0217">Developmental protein</keyword>
<keyword id="KW-0539">Nucleus</keyword>
<keyword id="KW-1185">Reference proteome</keyword>
<keyword id="KW-0879">Wnt signaling pathway</keyword>
<protein>
    <recommendedName>
        <fullName evidence="4">Protein CUSTOS</fullName>
    </recommendedName>
</protein>
<organism>
    <name type="scientific">Danio rerio</name>
    <name type="common">Zebrafish</name>
    <name type="synonym">Brachydanio rerio</name>
    <dbReference type="NCBI Taxonomy" id="7955"/>
    <lineage>
        <taxon>Eukaryota</taxon>
        <taxon>Metazoa</taxon>
        <taxon>Chordata</taxon>
        <taxon>Craniata</taxon>
        <taxon>Vertebrata</taxon>
        <taxon>Euteleostomi</taxon>
        <taxon>Actinopterygii</taxon>
        <taxon>Neopterygii</taxon>
        <taxon>Teleostei</taxon>
        <taxon>Ostariophysi</taxon>
        <taxon>Cypriniformes</taxon>
        <taxon>Danionidae</taxon>
        <taxon>Danioninae</taxon>
        <taxon>Danio</taxon>
    </lineage>
</organism>
<comment type="function">
    <text evidence="3">Essential for Spemann-Mangold organizer formation and subsequent anterior head development in the embryo. Inhibits canonical Wnt signaling pathway by antagonizing nuclear import of beta-catenin (ctnnb1) during embryogenesis.</text>
</comment>
<comment type="subunit">
    <text evidence="1">Interacts (via NLS1 and NLS2) with dvl2; the interaction is negatively regulated by Wnt stimulation. Interacts with csnk1a1. Interacts with ctnnb1; the interaction is positively regulated by Wnt stimulation.</text>
</comment>
<comment type="subcellular location">
    <subcellularLocation>
        <location evidence="1">Nucleus envelope</location>
    </subcellularLocation>
</comment>
<comment type="PTM">
    <text evidence="3">Phosphorylated by ck1/csnk1a1.</text>
</comment>
<comment type="disruption phenotype">
    <text evidence="3">Morpholino knockdown results in embryos with small eyes, head, and brain structures.</text>
</comment>
<comment type="miscellaneous">
    <text evidence="6">Named Custos for the Latin term for 'guard' or 'keeper'.</text>
</comment>
<comment type="similarity">
    <text evidence="5">Belongs to the CUSTOS family.</text>
</comment>
<sequence length="236" mass="26810">MSESSSEDENTARLKEAVWSFKPEDVKINGKENNGRQSHRADVSKHEHDGNELGTTPEFRSHVAKKLGTYLDGCISEVCSDTVEPAQSENREDEEGFRLFSSSTPGKWMEQSPPPPPKRRPVPSSSDSDSEMEMRFREAAVSLSDILGPVAQNLSEKTEEKSTKEETEDTVTKMKKKKKRKTSSEESQDKVNHQTEKQSNVEGNQEQTTAGERLKKKKKKKKKKRKKLEKDIKKDE</sequence>
<feature type="chain" id="PRO_0000444888" description="Protein CUSTOS">
    <location>
        <begin position="1"/>
        <end position="236"/>
    </location>
</feature>
<feature type="region of interest" description="Disordered" evidence="2">
    <location>
        <begin position="1"/>
        <end position="57"/>
    </location>
</feature>
<feature type="region of interest" description="Disordered" evidence="2">
    <location>
        <begin position="83"/>
        <end position="236"/>
    </location>
</feature>
<feature type="short sequence motif" description="Nucleolar localization signal (NLS1)" evidence="6">
    <location>
        <begin position="173"/>
        <end position="181"/>
    </location>
</feature>
<feature type="short sequence motif" description="Nucleolar localization signal (NLS2)" evidence="6">
    <location>
        <begin position="211"/>
        <end position="219"/>
    </location>
</feature>
<feature type="compositionally biased region" description="Basic and acidic residues" evidence="2">
    <location>
        <begin position="10"/>
        <end position="51"/>
    </location>
</feature>
<feature type="compositionally biased region" description="Basic and acidic residues" evidence="2">
    <location>
        <begin position="156"/>
        <end position="165"/>
    </location>
</feature>
<feature type="compositionally biased region" description="Basic and acidic residues" evidence="2">
    <location>
        <begin position="182"/>
        <end position="196"/>
    </location>
</feature>
<feature type="compositionally biased region" description="Polar residues" evidence="2">
    <location>
        <begin position="197"/>
        <end position="210"/>
    </location>
</feature>
<feature type="compositionally biased region" description="Basic residues" evidence="2">
    <location>
        <begin position="214"/>
        <end position="227"/>
    </location>
</feature>
<feature type="sequence conflict" description="In Ref. 2; AAI33841." evidence="5" ref="2">
    <original>K</original>
    <variation>KK</variation>
    <location>
        <position position="224"/>
    </location>
</feature>
<feature type="sequence conflict" description="In Ref. 2; AAI54735." evidence="5" ref="2">
    <original>K</original>
    <variation>KKKK</variation>
    <location>
        <position position="224"/>
    </location>
</feature>
<feature type="sequence conflict" description="In Ref. 2; AAI54735/AAI33841." evidence="5" ref="2">
    <original>K</original>
    <variation>E</variation>
    <location>
        <position position="230"/>
    </location>
</feature>
<reference key="1">
    <citation type="journal article" date="2013" name="Nature">
        <title>The zebrafish reference genome sequence and its relationship to the human genome.</title>
        <authorList>
            <person name="Howe K."/>
            <person name="Clark M.D."/>
            <person name="Torroja C.F."/>
            <person name="Torrance J."/>
            <person name="Berthelot C."/>
            <person name="Muffato M."/>
            <person name="Collins J.E."/>
            <person name="Humphray S."/>
            <person name="McLaren K."/>
            <person name="Matthews L."/>
            <person name="McLaren S."/>
            <person name="Sealy I."/>
            <person name="Caccamo M."/>
            <person name="Churcher C."/>
            <person name="Scott C."/>
            <person name="Barrett J.C."/>
            <person name="Koch R."/>
            <person name="Rauch G.J."/>
            <person name="White S."/>
            <person name="Chow W."/>
            <person name="Kilian B."/>
            <person name="Quintais L.T."/>
            <person name="Guerra-Assuncao J.A."/>
            <person name="Zhou Y."/>
            <person name="Gu Y."/>
            <person name="Yen J."/>
            <person name="Vogel J.H."/>
            <person name="Eyre T."/>
            <person name="Redmond S."/>
            <person name="Banerjee R."/>
            <person name="Chi J."/>
            <person name="Fu B."/>
            <person name="Langley E."/>
            <person name="Maguire S.F."/>
            <person name="Laird G.K."/>
            <person name="Lloyd D."/>
            <person name="Kenyon E."/>
            <person name="Donaldson S."/>
            <person name="Sehra H."/>
            <person name="Almeida-King J."/>
            <person name="Loveland J."/>
            <person name="Trevanion S."/>
            <person name="Jones M."/>
            <person name="Quail M."/>
            <person name="Willey D."/>
            <person name="Hunt A."/>
            <person name="Burton J."/>
            <person name="Sims S."/>
            <person name="McLay K."/>
            <person name="Plumb B."/>
            <person name="Davis J."/>
            <person name="Clee C."/>
            <person name="Oliver K."/>
            <person name="Clark R."/>
            <person name="Riddle C."/>
            <person name="Elliot D."/>
            <person name="Threadgold G."/>
            <person name="Harden G."/>
            <person name="Ware D."/>
            <person name="Begum S."/>
            <person name="Mortimore B."/>
            <person name="Kerry G."/>
            <person name="Heath P."/>
            <person name="Phillimore B."/>
            <person name="Tracey A."/>
            <person name="Corby N."/>
            <person name="Dunn M."/>
            <person name="Johnson C."/>
            <person name="Wood J."/>
            <person name="Clark S."/>
            <person name="Pelan S."/>
            <person name="Griffiths G."/>
            <person name="Smith M."/>
            <person name="Glithero R."/>
            <person name="Howden P."/>
            <person name="Barker N."/>
            <person name="Lloyd C."/>
            <person name="Stevens C."/>
            <person name="Harley J."/>
            <person name="Holt K."/>
            <person name="Panagiotidis G."/>
            <person name="Lovell J."/>
            <person name="Beasley H."/>
            <person name="Henderson C."/>
            <person name="Gordon D."/>
            <person name="Auger K."/>
            <person name="Wright D."/>
            <person name="Collins J."/>
            <person name="Raisen C."/>
            <person name="Dyer L."/>
            <person name="Leung K."/>
            <person name="Robertson L."/>
            <person name="Ambridge K."/>
            <person name="Leongamornlert D."/>
            <person name="McGuire S."/>
            <person name="Gilderthorp R."/>
            <person name="Griffiths C."/>
            <person name="Manthravadi D."/>
            <person name="Nichol S."/>
            <person name="Barker G."/>
            <person name="Whitehead S."/>
            <person name="Kay M."/>
            <person name="Brown J."/>
            <person name="Murnane C."/>
            <person name="Gray E."/>
            <person name="Humphries M."/>
            <person name="Sycamore N."/>
            <person name="Barker D."/>
            <person name="Saunders D."/>
            <person name="Wallis J."/>
            <person name="Babbage A."/>
            <person name="Hammond S."/>
            <person name="Mashreghi-Mohammadi M."/>
            <person name="Barr L."/>
            <person name="Martin S."/>
            <person name="Wray P."/>
            <person name="Ellington A."/>
            <person name="Matthews N."/>
            <person name="Ellwood M."/>
            <person name="Woodmansey R."/>
            <person name="Clark G."/>
            <person name="Cooper J."/>
            <person name="Tromans A."/>
            <person name="Grafham D."/>
            <person name="Skuce C."/>
            <person name="Pandian R."/>
            <person name="Andrews R."/>
            <person name="Harrison E."/>
            <person name="Kimberley A."/>
            <person name="Garnett J."/>
            <person name="Fosker N."/>
            <person name="Hall R."/>
            <person name="Garner P."/>
            <person name="Kelly D."/>
            <person name="Bird C."/>
            <person name="Palmer S."/>
            <person name="Gehring I."/>
            <person name="Berger A."/>
            <person name="Dooley C.M."/>
            <person name="Ersan-Urun Z."/>
            <person name="Eser C."/>
            <person name="Geiger H."/>
            <person name="Geisler M."/>
            <person name="Karotki L."/>
            <person name="Kirn A."/>
            <person name="Konantz J."/>
            <person name="Konantz M."/>
            <person name="Oberlander M."/>
            <person name="Rudolph-Geiger S."/>
            <person name="Teucke M."/>
            <person name="Lanz C."/>
            <person name="Raddatz G."/>
            <person name="Osoegawa K."/>
            <person name="Zhu B."/>
            <person name="Rapp A."/>
            <person name="Widaa S."/>
            <person name="Langford C."/>
            <person name="Yang F."/>
            <person name="Schuster S.C."/>
            <person name="Carter N.P."/>
            <person name="Harrow J."/>
            <person name="Ning Z."/>
            <person name="Herrero J."/>
            <person name="Searle S.M."/>
            <person name="Enright A."/>
            <person name="Geisler R."/>
            <person name="Plasterk R.H."/>
            <person name="Lee C."/>
            <person name="Westerfield M."/>
            <person name="de Jong P.J."/>
            <person name="Zon L.I."/>
            <person name="Postlethwait J.H."/>
            <person name="Nusslein-Volhard C."/>
            <person name="Hubbard T.J."/>
            <person name="Roest Crollius H."/>
            <person name="Rogers J."/>
            <person name="Stemple D.L."/>
        </authorList>
    </citation>
    <scope>NUCLEOTIDE SEQUENCE [LARGE SCALE GENOMIC DNA]</scope>
    <source>
        <strain>Tuebingen</strain>
    </source>
</reference>
<reference key="2">
    <citation type="submission" date="2007-11" db="EMBL/GenBank/DDBJ databases">
        <authorList>
            <consortium name="NIH - Zebrafish Gene Collection (ZGC) project"/>
        </authorList>
    </citation>
    <scope>NUCLEOTIDE SEQUENCE [LARGE SCALE MRNA]</scope>
    <source>
        <tissue>Liver</tissue>
    </source>
</reference>
<reference key="3">
    <citation type="journal article" date="2014" name="Proc. Natl. Acad. Sci. U.S.A.">
        <title>Custos controls beta-catenin to regulate head development during vertebrate embryogenesis.</title>
        <authorList>
            <person name="Komiya Y."/>
            <person name="Mandrekar N."/>
            <person name="Sato A."/>
            <person name="Dawid I.B."/>
            <person name="Habas R."/>
        </authorList>
    </citation>
    <scope>FUNCTION</scope>
    <scope>DISRUPTION PHENOTYPE</scope>
</reference>
<gene>
    <name evidence="4" type="primary">custos</name>
    <name type="ORF">zgc:162025</name>
</gene>
<name>CSTOS_DANRE</name>
<accession>A9C3N6</accession>
<accession>A3KNH5</accession>
<accession>A8WGJ3</accession>
<evidence type="ECO:0000250" key="1">
    <source>
        <dbReference type="UniProtKB" id="P0DPK0"/>
    </source>
</evidence>
<evidence type="ECO:0000256" key="2">
    <source>
        <dbReference type="SAM" id="MobiDB-lite"/>
    </source>
</evidence>
<evidence type="ECO:0000269" key="3">
    <source>
    </source>
</evidence>
<evidence type="ECO:0000303" key="4">
    <source>
    </source>
</evidence>
<evidence type="ECO:0000305" key="5"/>
<evidence type="ECO:0000305" key="6">
    <source>
    </source>
</evidence>
<dbReference type="EMBL" id="CR376731">
    <property type="status" value="NOT_ANNOTATED_CDS"/>
    <property type="molecule type" value="Genomic_DNA"/>
</dbReference>
<dbReference type="EMBL" id="BC154734">
    <property type="protein sequence ID" value="AAI54735.1"/>
    <property type="molecule type" value="mRNA"/>
</dbReference>
<dbReference type="EMBL" id="BC133840">
    <property type="protein sequence ID" value="AAI33841.1"/>
    <property type="molecule type" value="mRNA"/>
</dbReference>
<dbReference type="RefSeq" id="NP_001082895.1">
    <property type="nucleotide sequence ID" value="NM_001089426.1"/>
</dbReference>
<dbReference type="SMR" id="A9C3N6"/>
<dbReference type="FunCoup" id="A9C3N6">
    <property type="interactions" value="1069"/>
</dbReference>
<dbReference type="STRING" id="7955.ENSDARP00000067842"/>
<dbReference type="PaxDb" id="7955-ENSDARP00000067842"/>
<dbReference type="PeptideAtlas" id="A9C3N6"/>
<dbReference type="Ensembl" id="ENSDART00000067843">
    <property type="protein sequence ID" value="ENSDARP00000067842"/>
    <property type="gene ID" value="ENSDARG00000046141"/>
</dbReference>
<dbReference type="GeneID" id="571775"/>
<dbReference type="KEGG" id="dre:571775"/>
<dbReference type="AGR" id="ZFIN:ZDB-GENE-070424-17"/>
<dbReference type="ZFIN" id="ZDB-GENE-070424-17">
    <property type="gene designation" value="zgc:162025"/>
</dbReference>
<dbReference type="eggNOG" id="ENOG502S3AI">
    <property type="taxonomic scope" value="Eukaryota"/>
</dbReference>
<dbReference type="HOGENOM" id="CLU_092827_0_0_1"/>
<dbReference type="InParanoid" id="A9C3N6"/>
<dbReference type="OMA" id="THNANPA"/>
<dbReference type="OrthoDB" id="10053459at2759"/>
<dbReference type="TreeFam" id="TF336221"/>
<dbReference type="PRO" id="PR:A9C3N6"/>
<dbReference type="Proteomes" id="UP000000437">
    <property type="component" value="Chromosome 8"/>
</dbReference>
<dbReference type="Bgee" id="ENSDARG00000046141">
    <property type="expression patterns" value="Expressed in mature ovarian follicle and 19 other cell types or tissues"/>
</dbReference>
<dbReference type="GO" id="GO:0005635">
    <property type="term" value="C:nuclear envelope"/>
    <property type="evidence" value="ECO:0007669"/>
    <property type="project" value="UniProtKB-SubCell"/>
</dbReference>
<dbReference type="GO" id="GO:0097065">
    <property type="term" value="P:anterior head development"/>
    <property type="evidence" value="ECO:0000315"/>
    <property type="project" value="ZFIN"/>
</dbReference>
<dbReference type="GO" id="GO:0030178">
    <property type="term" value="P:negative regulation of Wnt signaling pathway"/>
    <property type="evidence" value="ECO:0000315"/>
    <property type="project" value="UniProtKB"/>
</dbReference>
<dbReference type="GO" id="GO:0060061">
    <property type="term" value="P:Spemann organizer formation"/>
    <property type="evidence" value="ECO:0000315"/>
    <property type="project" value="UniProtKB"/>
</dbReference>
<dbReference type="GO" id="GO:0016055">
    <property type="term" value="P:Wnt signaling pathway"/>
    <property type="evidence" value="ECO:0007669"/>
    <property type="project" value="UniProtKB-KW"/>
</dbReference>
<dbReference type="InterPro" id="IPR026694">
    <property type="entry name" value="CUSTOS"/>
</dbReference>
<dbReference type="PANTHER" id="PTHR14482">
    <property type="entry name" value="CHROMOSOME 12 ORF 43 HOMOLOG"/>
    <property type="match status" value="1"/>
</dbReference>
<dbReference type="PANTHER" id="PTHR14482:SF0">
    <property type="entry name" value="PROTEIN CUSTOS"/>
    <property type="match status" value="1"/>
</dbReference>
<dbReference type="Pfam" id="PF23999">
    <property type="entry name" value="CUSTOS"/>
    <property type="match status" value="1"/>
</dbReference>
<proteinExistence type="evidence at transcript level"/>